<accession>B1B557</accession>
<accession>B9X250</accession>
<name>NOSL_BOMMO</name>
<evidence type="ECO:0000250" key="1"/>
<evidence type="ECO:0000250" key="2">
    <source>
        <dbReference type="UniProtKB" id="P29474"/>
    </source>
</evidence>
<evidence type="ECO:0000250" key="3">
    <source>
        <dbReference type="UniProtKB" id="P29475"/>
    </source>
</evidence>
<evidence type="ECO:0000255" key="4"/>
<evidence type="ECO:0000255" key="5">
    <source>
        <dbReference type="PROSITE-ProRule" id="PRU00088"/>
    </source>
</evidence>
<evidence type="ECO:0000255" key="6">
    <source>
        <dbReference type="PROSITE-ProRule" id="PRU00716"/>
    </source>
</evidence>
<evidence type="ECO:0000303" key="7">
    <source ref="2"/>
</evidence>
<evidence type="ECO:0000305" key="8"/>
<evidence type="ECO:0000312" key="9">
    <source>
        <dbReference type="EMBL" id="BAG12563.1"/>
    </source>
</evidence>
<evidence type="ECO:0000312" key="10">
    <source>
        <dbReference type="EMBL" id="BAH23564.1"/>
    </source>
</evidence>
<gene>
    <name evidence="9" type="primary">NSL</name>
</gene>
<comment type="function">
    <text evidence="1">Produces nitric oxide (NO) which is a messenger molecule with diverse functions throughout the body.</text>
</comment>
<comment type="catalytic activity">
    <reaction>
        <text>2 L-arginine + 3 NADPH + 4 O2 + H(+) = 2 L-citrulline + 2 nitric oxide + 3 NADP(+) + 4 H2O</text>
        <dbReference type="Rhea" id="RHEA:19897"/>
        <dbReference type="ChEBI" id="CHEBI:15377"/>
        <dbReference type="ChEBI" id="CHEBI:15378"/>
        <dbReference type="ChEBI" id="CHEBI:15379"/>
        <dbReference type="ChEBI" id="CHEBI:16480"/>
        <dbReference type="ChEBI" id="CHEBI:32682"/>
        <dbReference type="ChEBI" id="CHEBI:57743"/>
        <dbReference type="ChEBI" id="CHEBI:57783"/>
        <dbReference type="ChEBI" id="CHEBI:58349"/>
        <dbReference type="EC" id="1.14.13.39"/>
    </reaction>
</comment>
<comment type="cofactor">
    <cofactor evidence="3">
        <name>heme b</name>
        <dbReference type="ChEBI" id="CHEBI:60344"/>
    </cofactor>
</comment>
<comment type="cofactor">
    <cofactor evidence="3">
        <name>FAD</name>
        <dbReference type="ChEBI" id="CHEBI:57692"/>
    </cofactor>
    <text evidence="3">Binds 1 FAD.</text>
</comment>
<comment type="cofactor">
    <cofactor evidence="3">
        <name>FMN</name>
        <dbReference type="ChEBI" id="CHEBI:58210"/>
    </cofactor>
    <text evidence="3">Binds 1 FMN.</text>
</comment>
<comment type="alternative products">
    <event type="alternative splicing"/>
    <isoform>
        <id>B1B557-1</id>
        <name evidence="9">1</name>
        <sequence type="displayed"/>
    </isoform>
    <isoform>
        <id>B1B557-2</id>
        <name evidence="10">2</name>
        <sequence type="described" ref="VSP_040368"/>
    </isoform>
    <text evidence="8">Additional isoforms seem to exist.</text>
</comment>
<comment type="similarity">
    <text evidence="4">Belongs to the NOS family.</text>
</comment>
<keyword id="KW-0025">Alternative splicing</keyword>
<keyword id="KW-0112">Calmodulin-binding</keyword>
<keyword id="KW-0274">FAD</keyword>
<keyword id="KW-0285">Flavoprotein</keyword>
<keyword id="KW-0288">FMN</keyword>
<keyword id="KW-0349">Heme</keyword>
<keyword id="KW-0408">Iron</keyword>
<keyword id="KW-0479">Metal-binding</keyword>
<keyword id="KW-0521">NADP</keyword>
<keyword id="KW-0560">Oxidoreductase</keyword>
<keyword id="KW-1185">Reference proteome</keyword>
<reference evidence="8 9" key="1">
    <citation type="journal article" date="2008" name="Genetics">
        <title>Positional cloning of a Bombyx wingless locus flugellos (fl) reveals a crucial role for fringe that is specific for wing morphogenesis.</title>
        <authorList>
            <person name="Sato K."/>
            <person name="Matsuoka-Matsunaga T."/>
            <person name="Futahashi R."/>
            <person name="Kojima T."/>
            <person name="Mita K."/>
            <person name="Banno Y."/>
            <person name="Fujiwara H."/>
        </authorList>
    </citation>
    <scope>NUCLEOTIDE SEQUENCE [MRNA] (ISOFORM 1)</scope>
    <source>
        <tissue evidence="9">Wing imaginal disk</tissue>
    </source>
</reference>
<reference evidence="8 10" key="2">
    <citation type="submission" date="2009-02" db="EMBL/GenBank/DDBJ databases">
        <title>Identification of nitric-oxide synthase from Bombyx mori.</title>
        <authorList>
            <person name="Nagaoka S."/>
            <person name="Takata Y."/>
        </authorList>
    </citation>
    <scope>NUCLEOTIDE SEQUENCE [MRNA] (ISOFORM 2)</scope>
    <source>
        <tissue evidence="10">Reproductive system</tissue>
    </source>
</reference>
<feature type="chain" id="PRO_0000403314" description="Nitric oxide synthase-like protein">
    <location>
        <begin position="1"/>
        <end position="1097"/>
    </location>
</feature>
<feature type="domain" description="Flavodoxin-like" evidence="5">
    <location>
        <begin position="420"/>
        <end position="615"/>
    </location>
</feature>
<feature type="domain" description="FAD-binding FR-type" evidence="6">
    <location>
        <begin position="669"/>
        <end position="914"/>
    </location>
</feature>
<feature type="region of interest" description="Calmodulin-binding" evidence="3">
    <location>
        <begin position="387"/>
        <end position="410"/>
    </location>
</feature>
<feature type="binding site" description="axial binding residue" evidence="2">
    <location>
        <position position="77"/>
    </location>
    <ligand>
        <name>heme b</name>
        <dbReference type="ChEBI" id="CHEBI:60344"/>
    </ligand>
    <ligandPart>
        <name>Fe</name>
        <dbReference type="ChEBI" id="CHEBI:18248"/>
    </ligandPart>
</feature>
<feature type="binding site" evidence="2">
    <location>
        <position position="140"/>
    </location>
    <ligand>
        <name>L-arginine</name>
        <dbReference type="ChEBI" id="CHEBI:32682"/>
    </ligand>
</feature>
<feature type="binding site" evidence="2">
    <location>
        <position position="249"/>
    </location>
    <ligand>
        <name>L-arginine</name>
        <dbReference type="ChEBI" id="CHEBI:32682"/>
    </ligand>
</feature>
<feature type="binding site" evidence="2">
    <location>
        <position position="250"/>
    </location>
    <ligand>
        <name>L-arginine</name>
        <dbReference type="ChEBI" id="CHEBI:32682"/>
    </ligand>
</feature>
<feature type="binding site" evidence="2">
    <location>
        <position position="254"/>
    </location>
    <ligand>
        <name>L-arginine</name>
        <dbReference type="ChEBI" id="CHEBI:32682"/>
    </ligand>
</feature>
<feature type="binding site" evidence="2">
    <location>
        <position position="259"/>
    </location>
    <ligand>
        <name>L-arginine</name>
        <dbReference type="ChEBI" id="CHEBI:32682"/>
    </ligand>
</feature>
<feature type="binding site" evidence="2">
    <location>
        <position position="340"/>
    </location>
    <ligand>
        <name>(6R)-L-erythro-5,6,7,8-tetrahydrobiopterin</name>
        <dbReference type="ChEBI" id="CHEBI:59560"/>
    </ligand>
</feature>
<feature type="binding site" evidence="2">
    <location>
        <position position="353"/>
    </location>
    <ligand>
        <name>(6R)-L-erythro-5,6,7,8-tetrahydrobiopterin</name>
        <dbReference type="ChEBI" id="CHEBI:59560"/>
    </ligand>
</feature>
<feature type="binding site" evidence="2">
    <location>
        <position position="368"/>
    </location>
    <ligand>
        <name>heme b</name>
        <dbReference type="ChEBI" id="CHEBI:60344"/>
    </ligand>
</feature>
<feature type="binding site" evidence="5">
    <location>
        <begin position="426"/>
        <end position="430"/>
    </location>
    <ligand>
        <name>FMN</name>
        <dbReference type="ChEBI" id="CHEBI:58210"/>
    </ligand>
</feature>
<feature type="binding site" evidence="5">
    <location>
        <begin position="561"/>
        <end position="592"/>
    </location>
    <ligand>
        <name>FMN</name>
        <dbReference type="ChEBI" id="CHEBI:58210"/>
    </ligand>
</feature>
<feature type="binding site" evidence="3">
    <location>
        <begin position="704"/>
        <end position="715"/>
    </location>
    <ligand>
        <name>FAD</name>
        <dbReference type="ChEBI" id="CHEBI:57692"/>
    </ligand>
</feature>
<feature type="binding site" evidence="3">
    <location>
        <begin position="847"/>
        <end position="857"/>
    </location>
    <ligand>
        <name>FAD</name>
        <dbReference type="ChEBI" id="CHEBI:57692"/>
    </ligand>
</feature>
<feature type="binding site" evidence="3">
    <location>
        <begin position="922"/>
        <end position="940"/>
    </location>
    <ligand>
        <name>NADP(+)</name>
        <dbReference type="ChEBI" id="CHEBI:58349"/>
    </ligand>
</feature>
<feature type="binding site" evidence="3">
    <location>
        <begin position="1019"/>
        <end position="1034"/>
    </location>
    <ligand>
        <name>NADP(+)</name>
        <dbReference type="ChEBI" id="CHEBI:58349"/>
    </ligand>
</feature>
<feature type="splice variant" id="VSP_040368" description="In isoform 2." evidence="7">
    <location>
        <begin position="1"/>
        <end position="231"/>
    </location>
</feature>
<feature type="sequence conflict" description="In Ref. 2; BAH23564." evidence="8" ref="2">
    <original>D</original>
    <variation>G</variation>
    <location>
        <position position="604"/>
    </location>
</feature>
<feature type="sequence conflict" description="In Ref. 2; BAH23564." evidence="8" ref="2">
    <original>T</original>
    <variation>A</variation>
    <location>
        <position position="675"/>
    </location>
</feature>
<feature type="sequence conflict" description="In Ref. 2; BAH23564." evidence="8" ref="2">
    <original>Y</original>
    <variation>F</variation>
    <location>
        <position position="885"/>
    </location>
</feature>
<feature type="sequence conflict" description="In Ref. 2; BAH23564." evidence="8" ref="2">
    <original>T</original>
    <variation>M</variation>
    <location>
        <position position="998"/>
    </location>
</feature>
<organism>
    <name type="scientific">Bombyx mori</name>
    <name type="common">Silk moth</name>
    <dbReference type="NCBI Taxonomy" id="7091"/>
    <lineage>
        <taxon>Eukaryota</taxon>
        <taxon>Metazoa</taxon>
        <taxon>Ecdysozoa</taxon>
        <taxon>Arthropoda</taxon>
        <taxon>Hexapoda</taxon>
        <taxon>Insecta</taxon>
        <taxon>Pterygota</taxon>
        <taxon>Neoptera</taxon>
        <taxon>Endopterygota</taxon>
        <taxon>Lepidoptera</taxon>
        <taxon>Glossata</taxon>
        <taxon>Ditrysia</taxon>
        <taxon>Bombycoidea</taxon>
        <taxon>Bombycidae</taxon>
        <taxon>Bombycinae</taxon>
        <taxon>Bombyx</taxon>
    </lineage>
</organism>
<sequence>MAIPGRGDVPRDPEEVLNDAKDFLGQYFASIRRANTPAHEARWKIVQEEVATTGTYQLTTTELVFGAKLAWRNASRCIGRIQWSKLQVFDCRQVTTTSGMFEALCNHIKYSTNKGNIRSAITLFPQRTDGKHDYRIWNSQLISYAGYRQPDGTVLGDPMHCEFTDLCLKLGWKPPRTAWDILPLVLSANGKDPDYFEIPRELVMEIHMTHPTFEWFKELELRWYALPAVSSMRFDCGGIEFTANAFNGWYMSTEIGCRNFCDTNRLNVLEKIAQNMGLDTRTPVNLWKDKALVEVNVAVLHSFQQHNATIVDHHTASESFIKHLDNENRLRSGCPADWIWIVPPMSSSITPVFHQEMALYYLKPSYEYQEPAWKTHQWQKSKPITGKRPINRKFHFKQIARAVKFTSKLFGRALSKRIKATVLYATETGKSEQYAKELGVIFGHAFNAQVHCMADYDITSIEHEALLLVVTSTFGNGDPPENGVAFGEHLCEILYADQVGEDSTGNQMLTPKSFIKANSDIQRYTAGNPKKLNRLESLKGSTTDATSIDSFGPLSNVRFAVFALGSSAYPNFCNFGKYVDKLLVDLGGERIHDLATGDEMCGQDQAFRKWASSVFNVACETFCLDDDETLQEAKRALGTVALSEETVQFARAGCRPATLHAALQKSLNKQFVSCTVKANKDLGDASAERSTIFIDLEPKEEIKYNPGDHVGIIACNRKELVESLLSRIKDVDDYDEPLQLQLLKETHTSSGLVKSWEPHEKLPIMSVRELFTRFLDITTPPTTILLQYLATTCEDEEEKKQLNVLATDPGAYEDWRHFHFPTLPEVLDQFPSARPNASLLAALLSPLQPRFYSISSSPLAHAKRLHLTVAVVTYRTQDGEGPVHYGVCSNYLMERKPGDEVYLFIRSAPNFHLPQDLSVPLILIGPGTGIAPFRGFWHHRRALQNSCSRTTTGPVWLFFGCRTKTMDLYREEKEQALKEGVLSKVFLALSREKEVPKTYVQEVAENVGAEIHDLLINKGAHFYVCGDCKMAEDVHQKLKGIVKKHGNMTDEQVQNFMFMLKEENRYHEDIFGITLRTAEVHSASRESARRNRVASQP</sequence>
<proteinExistence type="evidence at transcript level"/>
<protein>
    <recommendedName>
        <fullName>Nitric oxide synthase-like protein</fullName>
        <ecNumber>1.14.13.39</ecNumber>
    </recommendedName>
</protein>
<dbReference type="EC" id="1.14.13.39"/>
<dbReference type="EMBL" id="AB360590">
    <property type="protein sequence ID" value="BAG12563.1"/>
    <property type="molecule type" value="mRNA"/>
</dbReference>
<dbReference type="EMBL" id="AB485776">
    <property type="protein sequence ID" value="BAH23564.1"/>
    <property type="molecule type" value="mRNA"/>
</dbReference>
<dbReference type="RefSeq" id="NP_001116808.1">
    <molecule id="B1B557-1"/>
    <property type="nucleotide sequence ID" value="NM_001123336.1"/>
</dbReference>
<dbReference type="SMR" id="B1B557"/>
<dbReference type="FunCoup" id="B1B557">
    <property type="interactions" value="161"/>
</dbReference>
<dbReference type="STRING" id="7091.B1B557"/>
<dbReference type="PaxDb" id="7091-BGIBMGA002937-TA"/>
<dbReference type="EnsemblMetazoa" id="NM_001123336.1">
    <molecule id="B1B557-1"/>
    <property type="protein sequence ID" value="NP_001116808.1"/>
    <property type="gene ID" value="GeneID_100144542"/>
</dbReference>
<dbReference type="GeneID" id="100144542"/>
<dbReference type="KEGG" id="bmor:100144542"/>
<dbReference type="CTD" id="34495"/>
<dbReference type="eggNOG" id="KOG1158">
    <property type="taxonomic scope" value="Eukaryota"/>
</dbReference>
<dbReference type="HOGENOM" id="CLU_001570_16_0_1"/>
<dbReference type="InParanoid" id="B1B557"/>
<dbReference type="OMA" id="QVFDCRQ"/>
<dbReference type="Proteomes" id="UP000005204">
    <property type="component" value="Unassembled WGS sequence"/>
</dbReference>
<dbReference type="GO" id="GO:0005516">
    <property type="term" value="F:calmodulin binding"/>
    <property type="evidence" value="ECO:0007669"/>
    <property type="project" value="UniProtKB-KW"/>
</dbReference>
<dbReference type="GO" id="GO:0050660">
    <property type="term" value="F:flavin adenine dinucleotide binding"/>
    <property type="evidence" value="ECO:0007669"/>
    <property type="project" value="InterPro"/>
</dbReference>
<dbReference type="GO" id="GO:0010181">
    <property type="term" value="F:FMN binding"/>
    <property type="evidence" value="ECO:0007669"/>
    <property type="project" value="InterPro"/>
</dbReference>
<dbReference type="GO" id="GO:0020037">
    <property type="term" value="F:heme binding"/>
    <property type="evidence" value="ECO:0007669"/>
    <property type="project" value="InterPro"/>
</dbReference>
<dbReference type="GO" id="GO:0046872">
    <property type="term" value="F:metal ion binding"/>
    <property type="evidence" value="ECO:0007669"/>
    <property type="project" value="UniProtKB-KW"/>
</dbReference>
<dbReference type="GO" id="GO:0050661">
    <property type="term" value="F:NADP binding"/>
    <property type="evidence" value="ECO:0007669"/>
    <property type="project" value="InterPro"/>
</dbReference>
<dbReference type="GO" id="GO:0004517">
    <property type="term" value="F:nitric-oxide synthase activity"/>
    <property type="evidence" value="ECO:0007669"/>
    <property type="project" value="UniProtKB-EC"/>
</dbReference>
<dbReference type="GO" id="GO:0006809">
    <property type="term" value="P:nitric oxide biosynthetic process"/>
    <property type="evidence" value="ECO:0007669"/>
    <property type="project" value="InterPro"/>
</dbReference>
<dbReference type="CDD" id="cd00795">
    <property type="entry name" value="NOS_oxygenase_euk"/>
    <property type="match status" value="1"/>
</dbReference>
<dbReference type="FunFam" id="3.90.440.10:FF:000001">
    <property type="entry name" value="Endothelial nitric oxide synthase"/>
    <property type="match status" value="1"/>
</dbReference>
<dbReference type="FunFam" id="1.20.990.10:FF:000002">
    <property type="entry name" value="Nitric oxide synthase"/>
    <property type="match status" value="1"/>
</dbReference>
<dbReference type="FunFam" id="3.40.50.360:FF:000033">
    <property type="entry name" value="Nitric oxide synthase"/>
    <property type="match status" value="1"/>
</dbReference>
<dbReference type="FunFam" id="3.40.50.80:FF:000003">
    <property type="entry name" value="Nitric oxide synthase"/>
    <property type="match status" value="1"/>
</dbReference>
<dbReference type="Gene3D" id="3.40.50.360">
    <property type="match status" value="1"/>
</dbReference>
<dbReference type="Gene3D" id="1.20.990.10">
    <property type="entry name" value="NADPH-cytochrome p450 Reductase, Chain A, domain 3"/>
    <property type="match status" value="1"/>
</dbReference>
<dbReference type="Gene3D" id="3.90.340.10">
    <property type="entry name" value="Nitric Oxide Synthase, Chain A, domain 1"/>
    <property type="match status" value="1"/>
</dbReference>
<dbReference type="Gene3D" id="3.90.1230.10">
    <property type="entry name" value="Nitric Oxide Synthase, Chain A, domain 3"/>
    <property type="match status" value="1"/>
</dbReference>
<dbReference type="Gene3D" id="3.90.440.10">
    <property type="entry name" value="Nitric Oxide Synthase,Heme Domain,Chain A domain 2"/>
    <property type="match status" value="1"/>
</dbReference>
<dbReference type="Gene3D" id="3.40.50.80">
    <property type="entry name" value="Nucleotide-binding domain of ferredoxin-NADP reductase (FNR) module"/>
    <property type="match status" value="1"/>
</dbReference>
<dbReference type="Gene3D" id="2.40.30.10">
    <property type="entry name" value="Translation factors"/>
    <property type="match status" value="1"/>
</dbReference>
<dbReference type="InterPro" id="IPR003097">
    <property type="entry name" value="CysJ-like_FAD-binding"/>
</dbReference>
<dbReference type="InterPro" id="IPR017927">
    <property type="entry name" value="FAD-bd_FR_type"/>
</dbReference>
<dbReference type="InterPro" id="IPR001094">
    <property type="entry name" value="Flavdoxin-like"/>
</dbReference>
<dbReference type="InterPro" id="IPR008254">
    <property type="entry name" value="Flavodoxin/NO_synth"/>
</dbReference>
<dbReference type="InterPro" id="IPR001709">
    <property type="entry name" value="Flavoprot_Pyr_Nucl_cyt_Rdtase"/>
</dbReference>
<dbReference type="InterPro" id="IPR029039">
    <property type="entry name" value="Flavoprotein-like_sf"/>
</dbReference>
<dbReference type="InterPro" id="IPR039261">
    <property type="entry name" value="FNR_nucleotide-bd"/>
</dbReference>
<dbReference type="InterPro" id="IPR023173">
    <property type="entry name" value="NADPH_Cyt_P450_Rdtase_alpha"/>
</dbReference>
<dbReference type="InterPro" id="IPR050607">
    <property type="entry name" value="NOS"/>
</dbReference>
<dbReference type="InterPro" id="IPR044943">
    <property type="entry name" value="NOS_dom_1"/>
</dbReference>
<dbReference type="InterPro" id="IPR044940">
    <property type="entry name" value="NOS_dom_2"/>
</dbReference>
<dbReference type="InterPro" id="IPR044944">
    <property type="entry name" value="NOS_dom_3"/>
</dbReference>
<dbReference type="InterPro" id="IPR012144">
    <property type="entry name" value="NOS_euk"/>
</dbReference>
<dbReference type="InterPro" id="IPR004030">
    <property type="entry name" value="NOS_N"/>
</dbReference>
<dbReference type="InterPro" id="IPR036119">
    <property type="entry name" value="NOS_N_sf"/>
</dbReference>
<dbReference type="InterPro" id="IPR001433">
    <property type="entry name" value="OxRdtase_FAD/NAD-bd"/>
</dbReference>
<dbReference type="InterPro" id="IPR017938">
    <property type="entry name" value="Riboflavin_synthase-like_b-brl"/>
</dbReference>
<dbReference type="PANTHER" id="PTHR43410:SF1">
    <property type="entry name" value="NITRIC OXIDE SYNTHASE"/>
    <property type="match status" value="1"/>
</dbReference>
<dbReference type="PANTHER" id="PTHR43410">
    <property type="entry name" value="NITRIC OXIDE SYNTHASE OXYGENASE"/>
    <property type="match status" value="1"/>
</dbReference>
<dbReference type="Pfam" id="PF00667">
    <property type="entry name" value="FAD_binding_1"/>
    <property type="match status" value="1"/>
</dbReference>
<dbReference type="Pfam" id="PF00258">
    <property type="entry name" value="Flavodoxin_1"/>
    <property type="match status" value="1"/>
</dbReference>
<dbReference type="Pfam" id="PF00175">
    <property type="entry name" value="NAD_binding_1"/>
    <property type="match status" value="1"/>
</dbReference>
<dbReference type="Pfam" id="PF02898">
    <property type="entry name" value="NO_synthase"/>
    <property type="match status" value="1"/>
</dbReference>
<dbReference type="PIRSF" id="PIRSF000333">
    <property type="entry name" value="NOS"/>
    <property type="match status" value="1"/>
</dbReference>
<dbReference type="PRINTS" id="PR00369">
    <property type="entry name" value="FLAVODOXIN"/>
</dbReference>
<dbReference type="PRINTS" id="PR00371">
    <property type="entry name" value="FPNCR"/>
</dbReference>
<dbReference type="SUPFAM" id="SSF52343">
    <property type="entry name" value="Ferredoxin reductase-like, C-terminal NADP-linked domain"/>
    <property type="match status" value="1"/>
</dbReference>
<dbReference type="SUPFAM" id="SSF52218">
    <property type="entry name" value="Flavoproteins"/>
    <property type="match status" value="1"/>
</dbReference>
<dbReference type="SUPFAM" id="SSF56512">
    <property type="entry name" value="Nitric oxide (NO) synthase oxygenase domain"/>
    <property type="match status" value="1"/>
</dbReference>
<dbReference type="SUPFAM" id="SSF63380">
    <property type="entry name" value="Riboflavin synthase domain-like"/>
    <property type="match status" value="1"/>
</dbReference>
<dbReference type="PROSITE" id="PS51384">
    <property type="entry name" value="FAD_FR"/>
    <property type="match status" value="1"/>
</dbReference>
<dbReference type="PROSITE" id="PS50902">
    <property type="entry name" value="FLAVODOXIN_LIKE"/>
    <property type="match status" value="1"/>
</dbReference>
<dbReference type="PROSITE" id="PS60001">
    <property type="entry name" value="NOS"/>
    <property type="match status" value="1"/>
</dbReference>